<organism>
    <name type="scientific">Oceanobacillus iheyensis (strain DSM 14371 / CIP 107618 / JCM 11309 / KCTC 3954 / HTE831)</name>
    <dbReference type="NCBI Taxonomy" id="221109"/>
    <lineage>
        <taxon>Bacteria</taxon>
        <taxon>Bacillati</taxon>
        <taxon>Bacillota</taxon>
        <taxon>Bacilli</taxon>
        <taxon>Bacillales</taxon>
        <taxon>Bacillaceae</taxon>
        <taxon>Oceanobacillus</taxon>
    </lineage>
</organism>
<proteinExistence type="inferred from homology"/>
<comment type="function">
    <text evidence="1">Catalyzes the NAD(+)-dependent oxidation of L-carnitine to 3-dehydrocarnitine.</text>
</comment>
<comment type="catalytic activity">
    <reaction evidence="1">
        <text>carnitine + NAD(+) = 3-dehydrocarnitine + NADH + H(+)</text>
        <dbReference type="Rhea" id="RHEA:19265"/>
        <dbReference type="ChEBI" id="CHEBI:15378"/>
        <dbReference type="ChEBI" id="CHEBI:17126"/>
        <dbReference type="ChEBI" id="CHEBI:57540"/>
        <dbReference type="ChEBI" id="CHEBI:57885"/>
        <dbReference type="ChEBI" id="CHEBI:57945"/>
        <dbReference type="EC" id="1.1.1.108"/>
    </reaction>
</comment>
<comment type="pathway">
    <text evidence="1">Amine and polyamine metabolism; carnitine metabolism.</text>
</comment>
<comment type="subunit">
    <text evidence="1">Homodimer.</text>
</comment>
<comment type="subcellular location">
    <subcellularLocation>
        <location evidence="1">Cytoplasm</location>
    </subcellularLocation>
</comment>
<comment type="similarity">
    <text evidence="1">Belongs to the 3-hydroxyacyl-CoA dehydrogenase family. L-carnitine dehydrogenase subfamily.</text>
</comment>
<accession>Q8CUW0</accession>
<dbReference type="EC" id="1.1.1.108" evidence="1"/>
<dbReference type="EMBL" id="BA000028">
    <property type="protein sequence ID" value="BAC12953.1"/>
    <property type="molecule type" value="Genomic_DNA"/>
</dbReference>
<dbReference type="RefSeq" id="WP_011065400.1">
    <property type="nucleotide sequence ID" value="NC_004193.1"/>
</dbReference>
<dbReference type="SMR" id="Q8CUW0"/>
<dbReference type="STRING" id="221109.gene:10733235"/>
<dbReference type="KEGG" id="oih:OB0997"/>
<dbReference type="eggNOG" id="COG1250">
    <property type="taxonomic scope" value="Bacteria"/>
</dbReference>
<dbReference type="HOGENOM" id="CLU_009834_0_1_9"/>
<dbReference type="OrthoDB" id="9815331at2"/>
<dbReference type="PhylomeDB" id="Q8CUW0"/>
<dbReference type="UniPathway" id="UPA00117"/>
<dbReference type="Proteomes" id="UP000000822">
    <property type="component" value="Chromosome"/>
</dbReference>
<dbReference type="GO" id="GO:0005737">
    <property type="term" value="C:cytoplasm"/>
    <property type="evidence" value="ECO:0007669"/>
    <property type="project" value="UniProtKB-SubCell"/>
</dbReference>
<dbReference type="GO" id="GO:0047728">
    <property type="term" value="F:carnitine 3-dehydrogenase activity"/>
    <property type="evidence" value="ECO:0007669"/>
    <property type="project" value="UniProtKB-UniRule"/>
</dbReference>
<dbReference type="GO" id="GO:0070403">
    <property type="term" value="F:NAD+ binding"/>
    <property type="evidence" value="ECO:0007669"/>
    <property type="project" value="InterPro"/>
</dbReference>
<dbReference type="GO" id="GO:0009437">
    <property type="term" value="P:carnitine metabolic process"/>
    <property type="evidence" value="ECO:0007669"/>
    <property type="project" value="UniProtKB-UniRule"/>
</dbReference>
<dbReference type="GO" id="GO:0009056">
    <property type="term" value="P:catabolic process"/>
    <property type="evidence" value="ECO:0007669"/>
    <property type="project" value="UniProtKB-ARBA"/>
</dbReference>
<dbReference type="GO" id="GO:0006631">
    <property type="term" value="P:fatty acid metabolic process"/>
    <property type="evidence" value="ECO:0007669"/>
    <property type="project" value="InterPro"/>
</dbReference>
<dbReference type="Gene3D" id="1.10.1040.10">
    <property type="entry name" value="N-(1-d-carboxylethyl)-l-norvaline Dehydrogenase, domain 2"/>
    <property type="match status" value="1"/>
</dbReference>
<dbReference type="Gene3D" id="3.40.50.720">
    <property type="entry name" value="NAD(P)-binding Rossmann-like Domain"/>
    <property type="match status" value="1"/>
</dbReference>
<dbReference type="HAMAP" id="MF_02129">
    <property type="entry name" value="L_carnitine_dehydrog"/>
    <property type="match status" value="1"/>
</dbReference>
<dbReference type="InterPro" id="IPR006176">
    <property type="entry name" value="3-OHacyl-CoA_DH_NAD-bd"/>
</dbReference>
<dbReference type="InterPro" id="IPR006108">
    <property type="entry name" value="3HC_DH_C"/>
</dbReference>
<dbReference type="InterPro" id="IPR008927">
    <property type="entry name" value="6-PGluconate_DH-like_C_sf"/>
</dbReference>
<dbReference type="InterPro" id="IPR013328">
    <property type="entry name" value="6PGD_dom2"/>
</dbReference>
<dbReference type="InterPro" id="IPR026578">
    <property type="entry name" value="L-carnitine_dehydrogenase"/>
</dbReference>
<dbReference type="InterPro" id="IPR036291">
    <property type="entry name" value="NAD(P)-bd_dom_sf"/>
</dbReference>
<dbReference type="PANTHER" id="PTHR48075">
    <property type="entry name" value="3-HYDROXYACYL-COA DEHYDROGENASE FAMILY PROTEIN"/>
    <property type="match status" value="1"/>
</dbReference>
<dbReference type="PANTHER" id="PTHR48075:SF5">
    <property type="entry name" value="3-HYDROXYBUTYRYL-COA DEHYDROGENASE"/>
    <property type="match status" value="1"/>
</dbReference>
<dbReference type="Pfam" id="PF00725">
    <property type="entry name" value="3HCDH"/>
    <property type="match status" value="1"/>
</dbReference>
<dbReference type="Pfam" id="PF02737">
    <property type="entry name" value="3HCDH_N"/>
    <property type="match status" value="1"/>
</dbReference>
<dbReference type="SUPFAM" id="SSF48179">
    <property type="entry name" value="6-phosphogluconate dehydrogenase C-terminal domain-like"/>
    <property type="match status" value="1"/>
</dbReference>
<dbReference type="SUPFAM" id="SSF51735">
    <property type="entry name" value="NAD(P)-binding Rossmann-fold domains"/>
    <property type="match status" value="1"/>
</dbReference>
<name>LCDH_OCEIH</name>
<feature type="chain" id="PRO_0000417900" description="L-carnitine dehydrogenase">
    <location>
        <begin position="1"/>
        <end position="307"/>
    </location>
</feature>
<feature type="binding site" evidence="1">
    <location>
        <begin position="8"/>
        <end position="13"/>
    </location>
    <ligand>
        <name>NAD(+)</name>
        <dbReference type="ChEBI" id="CHEBI:57540"/>
    </ligand>
</feature>
<keyword id="KW-0963">Cytoplasm</keyword>
<keyword id="KW-0520">NAD</keyword>
<keyword id="KW-0560">Oxidoreductase</keyword>
<keyword id="KW-1185">Reference proteome</keyword>
<protein>
    <recommendedName>
        <fullName evidence="1">L-carnitine dehydrogenase</fullName>
        <shortName evidence="1">CDH</shortName>
        <shortName evidence="1">L-CDH</shortName>
        <ecNumber evidence="1">1.1.1.108</ecNumber>
    </recommendedName>
</protein>
<reference key="1">
    <citation type="journal article" date="2002" name="Nucleic Acids Res.">
        <title>Genome sequence of Oceanobacillus iheyensis isolated from the Iheya Ridge and its unexpected adaptive capabilities to extreme environments.</title>
        <authorList>
            <person name="Takami H."/>
            <person name="Takaki Y."/>
            <person name="Uchiyama I."/>
        </authorList>
    </citation>
    <scope>NUCLEOTIDE SEQUENCE [LARGE SCALE GENOMIC DNA]</scope>
    <source>
        <strain>DSM 14371 / CIP 107618 / JCM 11309 / KCTC 3954 / HTE831</strain>
    </source>
</reference>
<sequence>MKKVAVIGTGVIGNGWITRFLANGCEVVAHDPAPGAKERTIQAIENAWESVEQLGLKEGASKDSLTFVDSIEEAVKDADLIQESVPERYELKHGVLKEIDRFAHSNTIIGSSTSGIKPTDLQIGLNHPERLVVAHPFNPVYLLPLVEIVGGEATTKEITNRASVYYESLQMKPMVIEKEIEGFVADRLMEALWREALHLVNDGIATTEEVDKAITYGAGLRWAQMGPFMTFHLAGGNAGMRHMLEQFGPALKLPWTKLEAPELTDELKERVIQGCETHANDRSVEELEKKRNEFLVKLIDLVEDYWP</sequence>
<gene>
    <name evidence="2" type="ordered locus">OB0997</name>
</gene>
<evidence type="ECO:0000255" key="1">
    <source>
        <dbReference type="HAMAP-Rule" id="MF_02129"/>
    </source>
</evidence>
<evidence type="ECO:0000312" key="2">
    <source>
        <dbReference type="EMBL" id="BAC12953.1"/>
    </source>
</evidence>